<reference key="1">
    <citation type="submission" date="2006-03" db="EMBL/GenBank/DDBJ databases">
        <title>Complete sequence of Shewanella denitrificans OS217.</title>
        <authorList>
            <consortium name="US DOE Joint Genome Institute"/>
            <person name="Copeland A."/>
            <person name="Lucas S."/>
            <person name="Lapidus A."/>
            <person name="Barry K."/>
            <person name="Detter J.C."/>
            <person name="Glavina del Rio T."/>
            <person name="Hammon N."/>
            <person name="Israni S."/>
            <person name="Dalin E."/>
            <person name="Tice H."/>
            <person name="Pitluck S."/>
            <person name="Brettin T."/>
            <person name="Bruce D."/>
            <person name="Han C."/>
            <person name="Tapia R."/>
            <person name="Gilna P."/>
            <person name="Kiss H."/>
            <person name="Schmutz J."/>
            <person name="Larimer F."/>
            <person name="Land M."/>
            <person name="Hauser L."/>
            <person name="Kyrpides N."/>
            <person name="Lykidis A."/>
            <person name="Richardson P."/>
        </authorList>
    </citation>
    <scope>NUCLEOTIDE SEQUENCE [LARGE SCALE GENOMIC DNA]</scope>
    <source>
        <strain>OS217 / ATCC BAA-1090 / DSM 15013</strain>
    </source>
</reference>
<gene>
    <name evidence="1" type="primary">tatA</name>
    <name type="ordered locus">Sden_0458</name>
</gene>
<feature type="chain" id="PRO_1000044440" description="Sec-independent protein translocase protein TatA">
    <location>
        <begin position="1"/>
        <end position="79"/>
    </location>
</feature>
<feature type="transmembrane region" description="Helical" evidence="1">
    <location>
        <begin position="1"/>
        <end position="21"/>
    </location>
</feature>
<feature type="region of interest" description="Disordered" evidence="2">
    <location>
        <begin position="42"/>
        <end position="79"/>
    </location>
</feature>
<feature type="compositionally biased region" description="Polar residues" evidence="2">
    <location>
        <begin position="57"/>
        <end position="66"/>
    </location>
</feature>
<feature type="compositionally biased region" description="Basic and acidic residues" evidence="2">
    <location>
        <begin position="67"/>
        <end position="79"/>
    </location>
</feature>
<name>TATA_SHEDO</name>
<dbReference type="EMBL" id="CP000302">
    <property type="protein sequence ID" value="ABE53750.1"/>
    <property type="molecule type" value="Genomic_DNA"/>
</dbReference>
<dbReference type="RefSeq" id="WP_011494916.1">
    <property type="nucleotide sequence ID" value="NC_007954.1"/>
</dbReference>
<dbReference type="SMR" id="Q12S26"/>
<dbReference type="STRING" id="318161.Sden_0458"/>
<dbReference type="KEGG" id="sdn:Sden_0458"/>
<dbReference type="eggNOG" id="COG1826">
    <property type="taxonomic scope" value="Bacteria"/>
</dbReference>
<dbReference type="HOGENOM" id="CLU_086034_5_1_6"/>
<dbReference type="OrthoDB" id="7066617at2"/>
<dbReference type="Proteomes" id="UP000001982">
    <property type="component" value="Chromosome"/>
</dbReference>
<dbReference type="GO" id="GO:0033281">
    <property type="term" value="C:TAT protein transport complex"/>
    <property type="evidence" value="ECO:0007669"/>
    <property type="project" value="UniProtKB-UniRule"/>
</dbReference>
<dbReference type="GO" id="GO:0008320">
    <property type="term" value="F:protein transmembrane transporter activity"/>
    <property type="evidence" value="ECO:0007669"/>
    <property type="project" value="UniProtKB-UniRule"/>
</dbReference>
<dbReference type="GO" id="GO:0043953">
    <property type="term" value="P:protein transport by the Tat complex"/>
    <property type="evidence" value="ECO:0007669"/>
    <property type="project" value="UniProtKB-UniRule"/>
</dbReference>
<dbReference type="Gene3D" id="1.20.5.3310">
    <property type="match status" value="1"/>
</dbReference>
<dbReference type="HAMAP" id="MF_00236">
    <property type="entry name" value="TatA_E"/>
    <property type="match status" value="1"/>
</dbReference>
<dbReference type="InterPro" id="IPR003369">
    <property type="entry name" value="TatA/B/E"/>
</dbReference>
<dbReference type="InterPro" id="IPR006312">
    <property type="entry name" value="TatA/E"/>
</dbReference>
<dbReference type="NCBIfam" id="NF002813">
    <property type="entry name" value="PRK02958.1"/>
    <property type="match status" value="1"/>
</dbReference>
<dbReference type="NCBIfam" id="TIGR01411">
    <property type="entry name" value="tatAE"/>
    <property type="match status" value="1"/>
</dbReference>
<dbReference type="PANTHER" id="PTHR42982">
    <property type="entry name" value="SEC-INDEPENDENT PROTEIN TRANSLOCASE PROTEIN TATA"/>
    <property type="match status" value="1"/>
</dbReference>
<dbReference type="PANTHER" id="PTHR42982:SF1">
    <property type="entry name" value="SEC-INDEPENDENT PROTEIN TRANSLOCASE PROTEIN TATA"/>
    <property type="match status" value="1"/>
</dbReference>
<dbReference type="Pfam" id="PF02416">
    <property type="entry name" value="TatA_B_E"/>
    <property type="match status" value="1"/>
</dbReference>
<proteinExistence type="inferred from homology"/>
<organism>
    <name type="scientific">Shewanella denitrificans (strain OS217 / ATCC BAA-1090 / DSM 15013)</name>
    <dbReference type="NCBI Taxonomy" id="318161"/>
    <lineage>
        <taxon>Bacteria</taxon>
        <taxon>Pseudomonadati</taxon>
        <taxon>Pseudomonadota</taxon>
        <taxon>Gammaproteobacteria</taxon>
        <taxon>Alteromonadales</taxon>
        <taxon>Shewanellaceae</taxon>
        <taxon>Shewanella</taxon>
    </lineage>
</organism>
<protein>
    <recommendedName>
        <fullName evidence="1">Sec-independent protein translocase protein TatA</fullName>
    </recommendedName>
</protein>
<keyword id="KW-0997">Cell inner membrane</keyword>
<keyword id="KW-1003">Cell membrane</keyword>
<keyword id="KW-0472">Membrane</keyword>
<keyword id="KW-0653">Protein transport</keyword>
<keyword id="KW-1185">Reference proteome</keyword>
<keyword id="KW-0811">Translocation</keyword>
<keyword id="KW-0812">Transmembrane</keyword>
<keyword id="KW-1133">Transmembrane helix</keyword>
<keyword id="KW-0813">Transport</keyword>
<evidence type="ECO:0000255" key="1">
    <source>
        <dbReference type="HAMAP-Rule" id="MF_00236"/>
    </source>
</evidence>
<evidence type="ECO:0000256" key="2">
    <source>
        <dbReference type="SAM" id="MobiDB-lite"/>
    </source>
</evidence>
<sequence>MGGISIWQLLIIALIVILLFGTKKLRSLGGDLGGAVKGFKNAMTSETSEEEKKALEDSQTAQTSQQAEKKPESKDKEQA</sequence>
<accession>Q12S26</accession>
<comment type="function">
    <text evidence="1">Part of the twin-arginine translocation (Tat) system that transports large folded proteins containing a characteristic twin-arginine motif in their signal peptide across membranes. TatA could form the protein-conducting channel of the Tat system.</text>
</comment>
<comment type="subunit">
    <text evidence="1">The Tat system comprises two distinct complexes: a TatABC complex, containing multiple copies of TatA, TatB and TatC subunits, and a separate TatA complex, containing only TatA subunits. Substrates initially bind to the TatABC complex, which probably triggers association of the separate TatA complex to form the active translocon.</text>
</comment>
<comment type="subcellular location">
    <subcellularLocation>
        <location evidence="1">Cell inner membrane</location>
        <topology evidence="1">Single-pass membrane protein</topology>
    </subcellularLocation>
</comment>
<comment type="similarity">
    <text evidence="1">Belongs to the TatA/E family.</text>
</comment>